<accession>Q5EA65</accession>
<accession>Q3T0F3</accession>
<proteinExistence type="evidence at protein level"/>
<keyword id="KW-0256">Endoplasmic reticulum</keyword>
<keyword id="KW-0325">Glycoprotein</keyword>
<keyword id="KW-0328">Glycosyltransferase</keyword>
<keyword id="KW-0460">Magnesium</keyword>
<keyword id="KW-0472">Membrane</keyword>
<keyword id="KW-0479">Metal-binding</keyword>
<keyword id="KW-1185">Reference proteome</keyword>
<keyword id="KW-0808">Transferase</keyword>
<keyword id="KW-0812">Transmembrane</keyword>
<keyword id="KW-1133">Transmembrane helix</keyword>
<organism>
    <name type="scientific">Bos taurus</name>
    <name type="common">Bovine</name>
    <dbReference type="NCBI Taxonomy" id="9913"/>
    <lineage>
        <taxon>Eukaryota</taxon>
        <taxon>Metazoa</taxon>
        <taxon>Chordata</taxon>
        <taxon>Craniata</taxon>
        <taxon>Vertebrata</taxon>
        <taxon>Euteleostomi</taxon>
        <taxon>Mammalia</taxon>
        <taxon>Eutheria</taxon>
        <taxon>Laurasiatheria</taxon>
        <taxon>Artiodactyla</taxon>
        <taxon>Ruminantia</taxon>
        <taxon>Pecora</taxon>
        <taxon>Bovidae</taxon>
        <taxon>Bovinae</taxon>
        <taxon>Bos</taxon>
    </lineage>
</organism>
<comment type="function">
    <text evidence="3">UDP-N-acetylglucosamine--dolichyl-phosphate N-acetylglucosaminephosphotransferase that operates in the biosynthetic pathway of dolichol-linked oligosaccharides, the glycan precursors employed in protein asparagine (N)-glycosylation. The assembly of dolichol-linked oligosaccharides begins on the cytosolic side of the endoplasmic reticulum membrane and finishes in its lumen. The sequential addition of sugars to dolichol pyrophosphate produces dolichol-linked oligosaccharides containing fourteen sugars, including two GlcNAcs, nine mannoses and three glucoses. Once assembled, the oligosaccharide is transferred from the lipid to nascent proteins by oligosaccharyltransferases. Catalyzes the initial step of dolichol-linked oligosaccharide biosynthesis, transfering GlcNAc-1-P from cytosolic UDP-GlcNAc onto the carrier lipid dolichyl phosphate (P-dolichol), yielding GlcNAc-P-P-dolichol embedded in the cytoplasmic leaflet of the endoplasmic reticulum membrane.</text>
</comment>
<comment type="catalytic activity">
    <reaction evidence="3">
        <text>a di-trans,poly-cis-dolichyl phosphate + UDP-N-acetyl-alpha-D-glucosamine = an N-acetyl-alpha-D-glucosaminyl-diphospho-di-trans,poly-cis-dolichol + UMP</text>
        <dbReference type="Rhea" id="RHEA:13289"/>
        <dbReference type="Rhea" id="RHEA-COMP:19498"/>
        <dbReference type="Rhea" id="RHEA-COMP:19507"/>
        <dbReference type="ChEBI" id="CHEBI:57683"/>
        <dbReference type="ChEBI" id="CHEBI:57705"/>
        <dbReference type="ChEBI" id="CHEBI:57865"/>
        <dbReference type="ChEBI" id="CHEBI:58427"/>
        <dbReference type="EC" id="2.7.8.15"/>
    </reaction>
    <physiologicalReaction direction="left-to-right" evidence="6">
        <dbReference type="Rhea" id="RHEA:13290"/>
    </physiologicalReaction>
</comment>
<comment type="cofactor">
    <cofactor evidence="6">
        <name>Mg(2+)</name>
        <dbReference type="ChEBI" id="CHEBI:18420"/>
    </cofactor>
</comment>
<comment type="activity regulation">
    <text evidence="3">Inhibited by natural nucleoside antibiotic tunicamycin, which acts as a structural analog and competitor of UDP-GlcNAc (PubMed:2846531). Activated by Man-P-Dol (PubMed:2846531). Activated by manganese (PubMed:2846531). Inhibited by diumycin (PubMed:2846531).</text>
</comment>
<comment type="biophysicochemical properties">
    <kinetics>
        <KM evidence="3">4.5 uM for UDP-N-acetyl-alpha-D-glucosamine</KM>
        <KM evidence="3">16 uM for dolichol phosphate</KM>
    </kinetics>
    <phDependence>
        <text evidence="3">Optimum pH is 7.4-7.6.</text>
    </phDependence>
</comment>
<comment type="pathway">
    <text evidence="1">Protein modification; protein glycosylation.</text>
</comment>
<comment type="subunit">
    <text evidence="1">Homodimer.</text>
</comment>
<comment type="subcellular location">
    <subcellularLocation>
        <location evidence="3">Endoplasmic reticulum membrane</location>
        <topology evidence="1">Multi-pass membrane protein</topology>
    </subcellularLocation>
</comment>
<comment type="similarity">
    <text evidence="5">Belongs to the glycosyltransferase 4 family.</text>
</comment>
<dbReference type="EC" id="2.7.8.15" evidence="1"/>
<dbReference type="EMBL" id="BT020704">
    <property type="protein sequence ID" value="AAX08721.1"/>
    <property type="molecule type" value="mRNA"/>
</dbReference>
<dbReference type="EMBL" id="BC102417">
    <property type="protein sequence ID" value="AAI02418.1"/>
    <property type="molecule type" value="mRNA"/>
</dbReference>
<dbReference type="RefSeq" id="NP_001015664.1">
    <property type="nucleotide sequence ID" value="NM_001015664.1"/>
</dbReference>
<dbReference type="SMR" id="Q5EA65"/>
<dbReference type="FunCoup" id="Q5EA65">
    <property type="interactions" value="2171"/>
</dbReference>
<dbReference type="STRING" id="9913.ENSBTAP00000072144"/>
<dbReference type="GlyCosmos" id="Q5EA65">
    <property type="glycosylation" value="1 site, No reported glycans"/>
</dbReference>
<dbReference type="GlyGen" id="Q5EA65">
    <property type="glycosylation" value="1 site"/>
</dbReference>
<dbReference type="PaxDb" id="9913-ENSBTAP00000007065"/>
<dbReference type="GeneID" id="537812"/>
<dbReference type="KEGG" id="bta:537812"/>
<dbReference type="CTD" id="1798"/>
<dbReference type="eggNOG" id="KOG2788">
    <property type="taxonomic scope" value="Eukaryota"/>
</dbReference>
<dbReference type="HOGENOM" id="CLU_029942_0_1_1"/>
<dbReference type="InParanoid" id="Q5EA65"/>
<dbReference type="OrthoDB" id="10262326at2759"/>
<dbReference type="TreeFam" id="TF313734"/>
<dbReference type="UniPathway" id="UPA00378"/>
<dbReference type="Proteomes" id="UP000009136">
    <property type="component" value="Unplaced"/>
</dbReference>
<dbReference type="GO" id="GO:0005789">
    <property type="term" value="C:endoplasmic reticulum membrane"/>
    <property type="evidence" value="ECO:0000314"/>
    <property type="project" value="UniProtKB"/>
</dbReference>
<dbReference type="GO" id="GO:0016020">
    <property type="term" value="C:membrane"/>
    <property type="evidence" value="ECO:0000250"/>
    <property type="project" value="UniProtKB"/>
</dbReference>
<dbReference type="GO" id="GO:0016757">
    <property type="term" value="F:glycosyltransferase activity"/>
    <property type="evidence" value="ECO:0007669"/>
    <property type="project" value="UniProtKB-KW"/>
</dbReference>
<dbReference type="GO" id="GO:0042802">
    <property type="term" value="F:identical protein binding"/>
    <property type="evidence" value="ECO:0000250"/>
    <property type="project" value="UniProtKB"/>
</dbReference>
<dbReference type="GO" id="GO:0046872">
    <property type="term" value="F:metal ion binding"/>
    <property type="evidence" value="ECO:0007669"/>
    <property type="project" value="UniProtKB-KW"/>
</dbReference>
<dbReference type="GO" id="GO:0003975">
    <property type="term" value="F:UDP-N-acetylglucosamine-dolichyl-phosphate N-acetylglucosaminephosphotransferase activity"/>
    <property type="evidence" value="ECO:0000314"/>
    <property type="project" value="UniProtKB"/>
</dbReference>
<dbReference type="GO" id="GO:0019408">
    <property type="term" value="P:dolichol biosynthetic process"/>
    <property type="evidence" value="ECO:0000250"/>
    <property type="project" value="UniProtKB"/>
</dbReference>
<dbReference type="GO" id="GO:0006488">
    <property type="term" value="P:dolichol-linked oligosaccharide biosynthetic process"/>
    <property type="evidence" value="ECO:0000314"/>
    <property type="project" value="UniProtKB"/>
</dbReference>
<dbReference type="GO" id="GO:0006487">
    <property type="term" value="P:protein N-linked glycosylation"/>
    <property type="evidence" value="ECO:0000315"/>
    <property type="project" value="UniProtKB"/>
</dbReference>
<dbReference type="CDD" id="cd06855">
    <property type="entry name" value="GT_GPT_euk"/>
    <property type="match status" value="1"/>
</dbReference>
<dbReference type="InterPro" id="IPR048439">
    <property type="entry name" value="DPAGT1_ins"/>
</dbReference>
<dbReference type="InterPro" id="IPR000715">
    <property type="entry name" value="Glycosyl_transferase_4"/>
</dbReference>
<dbReference type="InterPro" id="IPR033895">
    <property type="entry name" value="GPT"/>
</dbReference>
<dbReference type="PANTHER" id="PTHR10571">
    <property type="entry name" value="UDP-N-ACETYLGLUCOSAMINE--DOLICHYL-PHOSPHATE N-ACETYLGLUCOSAMINEPHOSPHOTRANSFERASE"/>
    <property type="match status" value="1"/>
</dbReference>
<dbReference type="PANTHER" id="PTHR10571:SF0">
    <property type="entry name" value="UDP-N-ACETYLGLUCOSAMINE--DOLICHYL-PHOSPHATE N-ACETYLGLUCOSAMINEPHOSPHOTRANSFERASE"/>
    <property type="match status" value="1"/>
</dbReference>
<dbReference type="Pfam" id="PF21383">
    <property type="entry name" value="DPAGT1_ins"/>
    <property type="match status" value="1"/>
</dbReference>
<dbReference type="Pfam" id="PF00953">
    <property type="entry name" value="Glycos_transf_4"/>
    <property type="match status" value="1"/>
</dbReference>
<evidence type="ECO:0000250" key="1">
    <source>
        <dbReference type="UniProtKB" id="Q9H3H5"/>
    </source>
</evidence>
<evidence type="ECO:0000255" key="2"/>
<evidence type="ECO:0000269" key="3">
    <source>
    </source>
</evidence>
<evidence type="ECO:0000303" key="4">
    <source>
    </source>
</evidence>
<evidence type="ECO:0000305" key="5"/>
<evidence type="ECO:0000305" key="6">
    <source>
    </source>
</evidence>
<gene>
    <name evidence="1" type="primary">DPAGT1</name>
</gene>
<name>GPT_BOVIN</name>
<reference key="1">
    <citation type="journal article" date="2005" name="BMC Genomics">
        <title>Characterization of 954 bovine full-CDS cDNA sequences.</title>
        <authorList>
            <person name="Harhay G.P."/>
            <person name="Sonstegard T.S."/>
            <person name="Keele J.W."/>
            <person name="Heaton M.P."/>
            <person name="Clawson M.L."/>
            <person name="Snelling W.M."/>
            <person name="Wiedmann R.T."/>
            <person name="Van Tassell C.P."/>
            <person name="Smith T.P.L."/>
        </authorList>
    </citation>
    <scope>NUCLEOTIDE SEQUENCE [LARGE SCALE MRNA]</scope>
</reference>
<reference key="2">
    <citation type="submission" date="2005-08" db="EMBL/GenBank/DDBJ databases">
        <authorList>
            <consortium name="NIH - Mammalian Gene Collection (MGC) project"/>
        </authorList>
    </citation>
    <scope>NUCLEOTIDE SEQUENCE [LARGE SCALE MRNA]</scope>
    <source>
        <strain>Crossbred X Angus</strain>
        <tissue>Ileum</tissue>
    </source>
</reference>
<reference key="3">
    <citation type="journal article" date="1988" name="J. Biol. Chem.">
        <title>Purification and characterization of UDP-N-acetyl-D-glucosamine:dolichol phosphate N-acetyl-D-glucosamine-1-phosphate transferase involved in the biosynthesis of asparagine-linked glycoproteins in the mammary gland.</title>
        <authorList>
            <person name="Shailubhai K."/>
            <person name="Dong-Yu B."/>
            <person name="Saxena E.S."/>
            <person name="Vijay I.K."/>
        </authorList>
    </citation>
    <scope>IDENTIFICATION</scope>
    <scope>FUNCTION</scope>
    <scope>CATALYTIC ACTIVITY</scope>
    <scope>COFACTOR</scope>
    <scope>ACTIVITY REGULATION</scope>
    <scope>SUBCELLULAR LOCATION</scope>
    <scope>BIOPHYSICOCHEMICAL PROPERTIES</scope>
</reference>
<sequence>MWAFPELPMPLLVNLIGSLMGFVATVTLIPAFRGHFIAARLCGQDLNKSSREQIPESQGVISGAVFLIILFCFIPFPFLNCFVEQQCKAFPHHEFVALIGALLAICCMIFLGFADDVLNLRWRHKLLLPTAASLPLLMVYFTNFGNTTIVVPKPLRPILGLHLDLGILYYVYMGLLAVFCTNAINILAGINGLEAGQSLVISASIIVFNLVELDGDYRDDHIFSLYFMIPFFFTTLGLLYHNWYPSRVFVGDTFCYFAGMTFAVVGILGHFSKTMLLFFMPQVFNFLYSLPQLLHIIPCPRHRMPRLNTKTGKLEMSYSKFKTKSLSFLGTFILKVAENLGLLTVRHSEDEDGAFTECNNMTLINLLLKVFGPMHERNLTLLLLLLQVVGSAVTFSIRYQLVRLFYDV</sequence>
<protein>
    <recommendedName>
        <fullName>UDP-N-acetylglucosamine--dolichyl-phosphate N-acetylglucosaminephosphotransferase</fullName>
        <ecNumber evidence="1">2.7.8.15</ecNumber>
    </recommendedName>
    <alternativeName>
        <fullName evidence="4">GlcNAc-1-P transferase</fullName>
        <shortName>G1PT</shortName>
        <shortName>GPT</shortName>
    </alternativeName>
    <alternativeName>
        <fullName>N-acetylglucosamine-1-phosphate transferase</fullName>
    </alternativeName>
</protein>
<feature type="chain" id="PRO_0000314781" description="UDP-N-acetylglucosamine--dolichyl-phosphate N-acetylglucosaminephosphotransferase">
    <location>
        <begin position="1"/>
        <end position="408"/>
    </location>
</feature>
<feature type="topological domain" description="Lumenal" evidence="5">
    <location>
        <begin position="1"/>
        <end position="10"/>
    </location>
</feature>
<feature type="transmembrane region" description="Helical; Name=Helix 1" evidence="1">
    <location>
        <begin position="11"/>
        <end position="38"/>
    </location>
</feature>
<feature type="topological domain" description="Cytoplasmic" evidence="5">
    <location>
        <begin position="39"/>
        <end position="58"/>
    </location>
</feature>
<feature type="transmembrane region" description="Helical; Name=Helix 2" evidence="1">
    <location>
        <begin position="59"/>
        <end position="78"/>
    </location>
</feature>
<feature type="topological domain" description="Lumenal" evidence="5">
    <location>
        <begin position="79"/>
        <end position="91"/>
    </location>
</feature>
<feature type="transmembrane region" description="Helical; Name=Helix 3" evidence="1">
    <location>
        <begin position="92"/>
        <end position="118"/>
    </location>
</feature>
<feature type="topological domain" description="Cytoplasmic" evidence="5">
    <location>
        <begin position="119"/>
        <end position="121"/>
    </location>
</feature>
<feature type="transmembrane region" description="Helical; Name=Helix 4" evidence="1">
    <location>
        <begin position="122"/>
        <end position="143"/>
    </location>
</feature>
<feature type="topological domain" description="Lumenal" evidence="5">
    <location>
        <begin position="144"/>
        <end position="166"/>
    </location>
</feature>
<feature type="transmembrane region" description="Helical; Name=Helix 5" evidence="1">
    <location>
        <begin position="167"/>
        <end position="186"/>
    </location>
</feature>
<feature type="topological domain" description="Cytoplasmic" evidence="5">
    <location>
        <begin position="187"/>
        <end position="192"/>
    </location>
</feature>
<feature type="transmembrane region" description="Helical; Name=Helix 6" evidence="1">
    <location>
        <begin position="193"/>
        <end position="213"/>
    </location>
</feature>
<feature type="topological domain" description="Lumenal" evidence="5">
    <location>
        <begin position="214"/>
        <end position="218"/>
    </location>
</feature>
<feature type="transmembrane region" description="Helical; Name=Helix 7" evidence="1">
    <location>
        <begin position="219"/>
        <end position="242"/>
    </location>
</feature>
<feature type="topological domain" description="Cytoplasmic" evidence="5">
    <location>
        <begin position="243"/>
        <end position="250"/>
    </location>
</feature>
<feature type="transmembrane region" description="Helical; Name=Helix 8" evidence="1">
    <location>
        <begin position="251"/>
        <end position="269"/>
    </location>
</feature>
<feature type="topological domain" description="Lumenal" evidence="5">
    <location>
        <begin position="270"/>
        <end position="271"/>
    </location>
</feature>
<feature type="transmembrane region" description="Helical; Name=Helix 9" evidence="1">
    <location>
        <begin position="272"/>
        <end position="293"/>
    </location>
</feature>
<feature type="topological domain" description="Cytoplasmic" evidence="5">
    <location>
        <begin position="294"/>
        <end position="375"/>
    </location>
</feature>
<feature type="transmembrane region" description="Helical; Name=Helix 10" evidence="1">
    <location>
        <begin position="376"/>
        <end position="400"/>
    </location>
</feature>
<feature type="topological domain" description="Lumenal" evidence="5">
    <location>
        <begin position="401"/>
        <end position="408"/>
    </location>
</feature>
<feature type="binding site" evidence="1">
    <location>
        <begin position="44"/>
        <end position="46"/>
    </location>
    <ligand>
        <name>UDP-N-acetyl-alpha-D-glucosamine</name>
        <dbReference type="ChEBI" id="CHEBI:57705"/>
    </ligand>
</feature>
<feature type="binding site" evidence="1">
    <location>
        <position position="56"/>
    </location>
    <ligand>
        <name>UDP-N-acetyl-alpha-D-glucosamine</name>
        <dbReference type="ChEBI" id="CHEBI:57705"/>
    </ligand>
</feature>
<feature type="binding site" evidence="1">
    <location>
        <position position="125"/>
    </location>
    <ligand>
        <name>dolichyl phosphate</name>
        <dbReference type="ChEBI" id="CHEBI:57683"/>
    </ligand>
</feature>
<feature type="binding site" evidence="1">
    <location>
        <begin position="178"/>
        <end position="186"/>
    </location>
    <ligand>
        <name>dolichyl phosphate</name>
        <dbReference type="ChEBI" id="CHEBI:57683"/>
    </ligand>
</feature>
<feature type="binding site" evidence="1">
    <location>
        <position position="185"/>
    </location>
    <ligand>
        <name>Mg(2+)</name>
        <dbReference type="ChEBI" id="CHEBI:18420"/>
    </ligand>
</feature>
<feature type="binding site" evidence="1">
    <location>
        <position position="191"/>
    </location>
    <ligand>
        <name>UDP-N-acetyl-alpha-D-glucosamine</name>
        <dbReference type="ChEBI" id="CHEBI:57705"/>
    </ligand>
</feature>
<feature type="binding site" evidence="1">
    <location>
        <position position="252"/>
    </location>
    <ligand>
        <name>Mg(2+)</name>
        <dbReference type="ChEBI" id="CHEBI:18420"/>
    </ligand>
</feature>
<feature type="binding site" evidence="1">
    <location>
        <begin position="301"/>
        <end position="303"/>
    </location>
    <ligand>
        <name>UDP-N-acetyl-alpha-D-glucosamine</name>
        <dbReference type="ChEBI" id="CHEBI:57705"/>
    </ligand>
</feature>
<feature type="glycosylation site" description="N-linked (GlcNAc...) asparagine" evidence="2">
    <location>
        <position position="146"/>
    </location>
</feature>
<feature type="sequence conflict" description="In Ref. 2; AAI02418." evidence="5" ref="2">
    <original>G</original>
    <variation>D</variation>
    <location>
        <position position="312"/>
    </location>
</feature>